<accession>P14790</accession>
<accession>Q3ZCB5</accession>
<comment type="function">
    <text evidence="1 2">Subunit j, of the mitochondrial membrane ATP synthase complex (F(1)F(0) ATP synthase or Complex V) that produces ATP from ADP in the presence of a proton gradient across the membrane which is generated by electron transport complexes of the respiratory chain. ATP synthase complex consist of a soluble F(1) head domain - the catalytic core - and a membrane F(1) domain - the membrane proton channel. These two domains are linked by a central stalk rotating inside the F(1) region and a stationary peripheral stalk. During catalysis, ATP synthesis in the catalytic domain of F(1) is coupled via a rotary mechanism of the central stalk subunits to proton translocation (By similarity). In vivo, can only synthesize ATP although its ATP hydrolase activity can be activated artificially in vitro (By similarity). Part of the complex F(0) domain. Minor subunit required to maintain the ATP synthase population in the mitochondria (By similarity).</text>
</comment>
<comment type="subunit">
    <text evidence="2 4 6">Component of the ATP synthase complex composed at least of ATP5F1A/subunit alpha, ATP5F1B/subunit beta, ATP5MC1/subunit c (homooctomer), MT-ATP6/subunit a, MT-ATP8/subunit 8, ATP5ME/subunit e, ATP5MF/subunit f, ATP5MG/subunit g, ATP5MK/subunit k, ATP5MJ/subunit j, ATP5F1C/subunit gamma, ATP5F1D/subunit delta, ATP5F1E/subunit epsilon, ATP5PF/subunit F6, ATP5PB/subunit b, ATP5PD/subunit d, ATP5PO/subunit OSCP (PubMed:17570365, PubMed:25851905). ATP synthase complex consists of a soluble F(1) head domain (subunits alpha(3) and beta(3)) - the catalytic core - and a membrane F(0) domain - the membrane proton channel (subunits c, a, 8, e, f, g, k and j). These two domains are linked by a central stalk (subunits gamma, delta, and epsilon) rotating inside the F1 region and a stationary peripheral stalk (subunits F6, b, d, and OSCP) (By similarity).</text>
</comment>
<comment type="subcellular location">
    <subcellularLocation>
        <location evidence="2">Mitochondrion membrane</location>
        <topology evidence="3">Single-pass membrane protein</topology>
    </subcellularLocation>
</comment>
<comment type="tissue specificity">
    <text>Heart, brain and liver mitochondria.</text>
</comment>
<comment type="mass spectrometry"/>
<comment type="similarity">
    <text evidence="7">Belongs to the small mitochondrial proteolipid family.</text>
</comment>
<gene>
    <name evidence="2" type="primary">ATP5MJ</name>
    <name type="synonym">ATP5MPL</name>
    <name type="synonym">MP68</name>
</gene>
<reference key="1">
    <citation type="journal article" date="1990" name="FEBS Lett.">
        <title>Isolation and amino acid sequence of a novel 6.8-kDa mitochondrial proteolipid from beef heart. Use of FAB-MS for molecular mass determination.</title>
        <authorList>
            <person name="Terzi E."/>
            <person name="Boyot P."/>
            <person name="van Dorsselaer A."/>
            <person name="Luu B."/>
            <person name="Trifilieff E."/>
        </authorList>
    </citation>
    <scope>PROTEIN SEQUENCE</scope>
    <scope>MASS SPECTROMETRY</scope>
    <source>
        <tissue>Heart</tissue>
    </source>
</reference>
<reference key="2">
    <citation type="submission" date="2005-08" db="EMBL/GenBank/DDBJ databases">
        <authorList>
            <consortium name="NIH - Mammalian Gene Collection (MGC) project"/>
        </authorList>
    </citation>
    <scope>NUCLEOTIDE SEQUENCE [LARGE SCALE MRNA]</scope>
    <source>
        <strain>Crossbred X Angus</strain>
        <tissue>Ileum</tissue>
    </source>
</reference>
<reference key="3">
    <citation type="journal article" date="2007" name="Mol. Cell. Proteomics">
        <title>Identification of two proteins associated with mammalian ATP synthase.</title>
        <authorList>
            <person name="Meyer B."/>
            <person name="Wittig I."/>
            <person name="Trifilieff E."/>
            <person name="Karas M."/>
            <person name="Schaegger H."/>
        </authorList>
    </citation>
    <scope>PROTEIN SEQUENCE OF 1-24</scope>
    <scope>IDENTIFICATION BY MASS SPECTROMETRY</scope>
</reference>
<reference key="4">
    <citation type="journal article" date="2007" name="FEBS Lett.">
        <title>Association of two proteolipids of unknown function with ATP synthase from bovine heart mitochondria.</title>
        <authorList>
            <person name="Chen R."/>
            <person name="Runswick M.J."/>
            <person name="Carroll J."/>
            <person name="Fearnley I.M."/>
            <person name="Walker J.E."/>
        </authorList>
    </citation>
    <scope>IDENTIFICATION BY MASS SPECTROMETRY</scope>
    <scope>IDENTIFICATION IN THE ATP SYNTHASE COMPLEX</scope>
</reference>
<reference key="5">
    <citation type="journal article" date="2015" name="J. Biol. Chem.">
        <title>Organization of Subunits in the Membrane Domain of the Bovine F-ATPase Revealed by Covalent Cross-linking.</title>
        <authorList>
            <person name="Lee J."/>
            <person name="Ding S."/>
            <person name="Walpole T.B."/>
            <person name="Holding A.N."/>
            <person name="Montgomery M.G."/>
            <person name="Fearnley I.M."/>
            <person name="Walker J.E."/>
        </authorList>
    </citation>
    <scope>IDENTIFICATION BY MASS SPECTROMETRY</scope>
    <scope>IDENTIFICATION IN THE ATP SYNTHASE COMPLEX</scope>
</reference>
<dbReference type="EMBL" id="BC102582">
    <property type="protein sequence ID" value="AAI02583.1"/>
    <property type="molecule type" value="mRNA"/>
</dbReference>
<dbReference type="PIR" id="A34138">
    <property type="entry name" value="A34138"/>
</dbReference>
<dbReference type="RefSeq" id="NP_001106786.1">
    <property type="nucleotide sequence ID" value="NM_001113315.1"/>
</dbReference>
<dbReference type="RefSeq" id="XP_059735169.1">
    <property type="nucleotide sequence ID" value="XM_059879186.1"/>
</dbReference>
<dbReference type="PDB" id="6ZBB">
    <property type="method" value="EM"/>
    <property type="resolution" value="3.61 A"/>
    <property type="chains" value="j=1-60"/>
</dbReference>
<dbReference type="PDB" id="6ZIQ">
    <property type="method" value="EM"/>
    <property type="resolution" value="4.33 A"/>
    <property type="chains" value="j=1-60"/>
</dbReference>
<dbReference type="PDB" id="6ZIT">
    <property type="method" value="EM"/>
    <property type="resolution" value="3.49 A"/>
    <property type="chains" value="j=1-60"/>
</dbReference>
<dbReference type="PDB" id="6ZIU">
    <property type="method" value="EM"/>
    <property type="resolution" value="6.02 A"/>
    <property type="chains" value="j=1-60"/>
</dbReference>
<dbReference type="PDB" id="6ZPO">
    <property type="method" value="EM"/>
    <property type="resolution" value="4.00 A"/>
    <property type="chains" value="j=1-60"/>
</dbReference>
<dbReference type="PDB" id="6ZQM">
    <property type="method" value="EM"/>
    <property type="resolution" value="3.29 A"/>
    <property type="chains" value="j=1-60"/>
</dbReference>
<dbReference type="PDB" id="6ZQN">
    <property type="method" value="EM"/>
    <property type="resolution" value="4.00 A"/>
    <property type="chains" value="j=1-60"/>
</dbReference>
<dbReference type="PDB" id="7AJB">
    <property type="method" value="EM"/>
    <property type="resolution" value="9.20 A"/>
    <property type="chains" value="Aj/j=1-60"/>
</dbReference>
<dbReference type="PDB" id="7AJC">
    <property type="method" value="EM"/>
    <property type="resolution" value="11.90 A"/>
    <property type="chains" value="Aj/j=1-60"/>
</dbReference>
<dbReference type="PDB" id="7AJD">
    <property type="method" value="EM"/>
    <property type="resolution" value="9.00 A"/>
    <property type="chains" value="Aj/j=1-60"/>
</dbReference>
<dbReference type="PDB" id="7AJE">
    <property type="method" value="EM"/>
    <property type="resolution" value="9.40 A"/>
    <property type="chains" value="Aj/j=1-60"/>
</dbReference>
<dbReference type="PDB" id="7AJF">
    <property type="method" value="EM"/>
    <property type="resolution" value="8.45 A"/>
    <property type="chains" value="Aj/j=1-60"/>
</dbReference>
<dbReference type="PDB" id="7AJG">
    <property type="method" value="EM"/>
    <property type="resolution" value="10.70 A"/>
    <property type="chains" value="Aj/j=1-60"/>
</dbReference>
<dbReference type="PDB" id="7AJH">
    <property type="method" value="EM"/>
    <property type="resolution" value="9.70 A"/>
    <property type="chains" value="Aj/j=1-60"/>
</dbReference>
<dbReference type="PDB" id="7AJI">
    <property type="method" value="EM"/>
    <property type="resolution" value="11.40 A"/>
    <property type="chains" value="Aj/j=1-60"/>
</dbReference>
<dbReference type="PDB" id="7AJJ">
    <property type="method" value="EM"/>
    <property type="resolution" value="13.10 A"/>
    <property type="chains" value="Aj/j=1-60"/>
</dbReference>
<dbReference type="PDBsum" id="6ZBB"/>
<dbReference type="PDBsum" id="6ZIQ"/>
<dbReference type="PDBsum" id="6ZIT"/>
<dbReference type="PDBsum" id="6ZIU"/>
<dbReference type="PDBsum" id="6ZPO"/>
<dbReference type="PDBsum" id="6ZQM"/>
<dbReference type="PDBsum" id="6ZQN"/>
<dbReference type="PDBsum" id="7AJB"/>
<dbReference type="PDBsum" id="7AJC"/>
<dbReference type="PDBsum" id="7AJD"/>
<dbReference type="PDBsum" id="7AJE"/>
<dbReference type="PDBsum" id="7AJF"/>
<dbReference type="PDBsum" id="7AJG"/>
<dbReference type="PDBsum" id="7AJH"/>
<dbReference type="PDBsum" id="7AJI"/>
<dbReference type="PDBsum" id="7AJJ"/>
<dbReference type="EMDB" id="EMD-11230"/>
<dbReference type="SMR" id="P14790"/>
<dbReference type="CORUM" id="P14790"/>
<dbReference type="FunCoup" id="P14790">
    <property type="interactions" value="238"/>
</dbReference>
<dbReference type="IntAct" id="P14790">
    <property type="interactions" value="1"/>
</dbReference>
<dbReference type="MINT" id="P14790"/>
<dbReference type="STRING" id="9913.ENSBTAP00000038273"/>
<dbReference type="PaxDb" id="9913-ENSBTAP00000038273"/>
<dbReference type="Ensembl" id="ENSBTAT00000038460.2">
    <property type="protein sequence ID" value="ENSBTAP00000038273.1"/>
    <property type="gene ID" value="ENSBTAG00000026886.5"/>
</dbReference>
<dbReference type="GeneID" id="767909"/>
<dbReference type="KEGG" id="bta:767909"/>
<dbReference type="CTD" id="9556"/>
<dbReference type="VEuPathDB" id="HostDB:ENSBTAG00000026886"/>
<dbReference type="VGNC" id="VGNC:49542">
    <property type="gene designation" value="ATP5MJ"/>
</dbReference>
<dbReference type="eggNOG" id="ENOG502SVSA">
    <property type="taxonomic scope" value="Eukaryota"/>
</dbReference>
<dbReference type="GeneTree" id="ENSGT00390000016760"/>
<dbReference type="HOGENOM" id="CLU_198465_0_0_1"/>
<dbReference type="InParanoid" id="P14790"/>
<dbReference type="OMA" id="AMIPKSW"/>
<dbReference type="OrthoDB" id="8767433at2759"/>
<dbReference type="TreeFam" id="TF338412"/>
<dbReference type="Reactome" id="R-BTA-163210">
    <property type="pathway name" value="Formation of ATP by chemiosmotic coupling"/>
</dbReference>
<dbReference type="Reactome" id="R-BTA-8949613">
    <property type="pathway name" value="Cristae formation"/>
</dbReference>
<dbReference type="Proteomes" id="UP000009136">
    <property type="component" value="Chromosome 21"/>
</dbReference>
<dbReference type="Bgee" id="ENSBTAG00000026886">
    <property type="expression patterns" value="Expressed in tongue muscle and 105 other cell types or tissues"/>
</dbReference>
<dbReference type="GO" id="GO:0031966">
    <property type="term" value="C:mitochondrial membrane"/>
    <property type="evidence" value="ECO:0007669"/>
    <property type="project" value="UniProtKB-SubCell"/>
</dbReference>
<dbReference type="GO" id="GO:0005739">
    <property type="term" value="C:mitochondrion"/>
    <property type="evidence" value="ECO:0000305"/>
    <property type="project" value="UniProtKB"/>
</dbReference>
<dbReference type="GO" id="GO:0045259">
    <property type="term" value="C:proton-transporting ATP synthase complex"/>
    <property type="evidence" value="ECO:0000314"/>
    <property type="project" value="UniProtKB"/>
</dbReference>
<dbReference type="InterPro" id="IPR012574">
    <property type="entry name" value="ATP5MJ"/>
</dbReference>
<dbReference type="PANTHER" id="PTHR15233:SF1">
    <property type="entry name" value="ATP SYNTHASE SUBUNIT ATP5MJ, MITOCHONDRIAL"/>
    <property type="match status" value="1"/>
</dbReference>
<dbReference type="PANTHER" id="PTHR15233">
    <property type="entry name" value="MITOCHONDRIAL PROTEOLIPID"/>
    <property type="match status" value="1"/>
</dbReference>
<dbReference type="Pfam" id="PF08039">
    <property type="entry name" value="Mit_proteolip"/>
    <property type="match status" value="1"/>
</dbReference>
<feature type="chain" id="PRO_0000064392" description="ATP synthase F(0) complex subunit j, mitochondrial">
    <location>
        <begin position="1"/>
        <end position="60"/>
    </location>
</feature>
<feature type="transmembrane region" description="Helical" evidence="2">
    <location>
        <begin position="22"/>
        <end position="39"/>
    </location>
</feature>
<feature type="helix" evidence="8">
    <location>
        <begin position="3"/>
        <end position="9"/>
    </location>
</feature>
<feature type="turn" evidence="8">
    <location>
        <begin position="10"/>
        <end position="13"/>
    </location>
</feature>
<feature type="helix" evidence="8">
    <location>
        <begin position="14"/>
        <end position="18"/>
    </location>
</feature>
<feature type="turn" evidence="8">
    <location>
        <begin position="19"/>
        <end position="21"/>
    </location>
</feature>
<feature type="helix" evidence="8">
    <location>
        <begin position="22"/>
        <end position="45"/>
    </location>
</feature>
<organism>
    <name type="scientific">Bos taurus</name>
    <name type="common">Bovine</name>
    <dbReference type="NCBI Taxonomy" id="9913"/>
    <lineage>
        <taxon>Eukaryota</taxon>
        <taxon>Metazoa</taxon>
        <taxon>Chordata</taxon>
        <taxon>Craniata</taxon>
        <taxon>Vertebrata</taxon>
        <taxon>Euteleostomi</taxon>
        <taxon>Mammalia</taxon>
        <taxon>Eutheria</taxon>
        <taxon>Laurasiatheria</taxon>
        <taxon>Artiodactyla</taxon>
        <taxon>Ruminantia</taxon>
        <taxon>Pecora</taxon>
        <taxon>Bovidae</taxon>
        <taxon>Bovinae</taxon>
        <taxon>Bos</taxon>
    </lineage>
</organism>
<name>ATP68_BOVIN</name>
<protein>
    <recommendedName>
        <fullName evidence="2">ATP synthase F(0) complex subunit j, mitochondrial</fullName>
    </recommendedName>
    <alternativeName>
        <fullName>6.8 kDa mitochondrial proteolipid</fullName>
    </alternativeName>
    <alternativeName>
        <fullName>6.8 kDa mitochondrial proteolipid protein</fullName>
        <shortName>MLQ</shortName>
    </alternativeName>
</protein>
<proteinExistence type="evidence at protein level"/>
<sequence>MLQSLIKKVWIPMKPYYTQAYQEIWVGTGLMAYIVYKIRSADKRSKALKASSAAPAHGHH</sequence>
<keyword id="KW-0002">3D-structure</keyword>
<keyword id="KW-0903">Direct protein sequencing</keyword>
<keyword id="KW-0472">Membrane</keyword>
<keyword id="KW-0496">Mitochondrion</keyword>
<keyword id="KW-1185">Reference proteome</keyword>
<keyword id="KW-0812">Transmembrane</keyword>
<keyword id="KW-1133">Transmembrane helix</keyword>
<evidence type="ECO:0000250" key="1">
    <source>
        <dbReference type="UniProtKB" id="P19483"/>
    </source>
</evidence>
<evidence type="ECO:0000250" key="2">
    <source>
        <dbReference type="UniProtKB" id="P56378"/>
    </source>
</evidence>
<evidence type="ECO:0000255" key="3"/>
<evidence type="ECO:0000269" key="4">
    <source>
    </source>
</evidence>
<evidence type="ECO:0000269" key="5">
    <source>
    </source>
</evidence>
<evidence type="ECO:0000269" key="6">
    <source>
    </source>
</evidence>
<evidence type="ECO:0000305" key="7"/>
<evidence type="ECO:0007829" key="8">
    <source>
        <dbReference type="PDB" id="6ZIT"/>
    </source>
</evidence>